<evidence type="ECO:0000255" key="1"/>
<evidence type="ECO:0000255" key="2">
    <source>
        <dbReference type="PROSITE-ProRule" id="PRU00217"/>
    </source>
</evidence>
<evidence type="ECO:0000269" key="3">
    <source>
    </source>
</evidence>
<evidence type="ECO:0000303" key="4">
    <source>
    </source>
</evidence>
<evidence type="ECO:0000305" key="5">
    <source>
    </source>
</evidence>
<evidence type="ECO:0000312" key="6">
    <source>
        <dbReference type="Araport" id="AT2G03390"/>
    </source>
</evidence>
<evidence type="ECO:0000312" key="7">
    <source>
        <dbReference type="EMBL" id="AAD17448.1"/>
    </source>
</evidence>
<gene>
    <name evidence="4" type="primary">CLPF</name>
    <name evidence="6" type="ordered locus">At2g03390</name>
    <name evidence="7" type="ORF">T4M8.18</name>
</gene>
<feature type="transit peptide" description="Chloroplast" evidence="1">
    <location>
        <begin position="1"/>
        <end position="65"/>
    </location>
</feature>
<feature type="chain" id="PRO_0000438516" description="Clp protease adapter protein ClpF, chloroplastic" evidence="1">
    <location>
        <begin position="66"/>
        <end position="330"/>
    </location>
</feature>
<feature type="domain" description="UVR" evidence="2">
    <location>
        <begin position="153"/>
        <end position="188"/>
    </location>
</feature>
<feature type="region of interest" description="NTD, required for CLPS1-binding" evidence="5">
    <location>
        <begin position="66"/>
        <end position="138"/>
    </location>
</feature>
<feature type="region of interest" description="YccV-like" evidence="5">
    <location>
        <begin position="203"/>
        <end position="310"/>
    </location>
</feature>
<feature type="coiled-coil region" evidence="1">
    <location>
        <begin position="112"/>
        <end position="139"/>
    </location>
</feature>
<feature type="coiled-coil region" evidence="1">
    <location>
        <begin position="175"/>
        <end position="195"/>
    </location>
</feature>
<feature type="splice variant" id="VSP_058668" description="In isoform 3.">
    <original>MVQSQSLSTLTICGSVKVSSLLRNRLNSVKASSLIGDRCVSCQFLRKSPSFRSHWKSLKQRNLLRVEARWPFQGGGEQGLDPSSERSESANEDILIFFFQLDLATRVQYAMNLEQYDIAQQLREKLTEVEEESIRLQEGKRGSSAKSEAQDKGISIIRLRADLQNAIDSEDYGLAAKLRDEISKLEAESLAVSAKALAFEKAEYAFRLGQKLRHKTF</original>
    <variation>MYYLSACLTLVYIHNEELMLVSFRL</variation>
    <location>
        <begin position="1"/>
        <end position="217"/>
    </location>
</feature>
<feature type="splice variant" id="VSP_058669" description="In isoform 2.">
    <location>
        <begin position="1"/>
        <end position="110"/>
    </location>
</feature>
<feature type="splice variant" id="VSP_058670" description="In isoform 4.">
    <original>YAMNLEQYDIAQQLREKLTEVEE</original>
    <variation>VKTKCRVFISFKMVANGFDVLQY</variation>
    <location>
        <begin position="109"/>
        <end position="131"/>
    </location>
</feature>
<feature type="splice variant" id="VSP_058671" description="In isoform 4.">
    <location>
        <begin position="132"/>
        <end position="330"/>
    </location>
</feature>
<reference key="1">
    <citation type="journal article" date="1999" name="Nature">
        <title>Sequence and analysis of chromosome 2 of the plant Arabidopsis thaliana.</title>
        <authorList>
            <person name="Lin X."/>
            <person name="Kaul S."/>
            <person name="Rounsley S.D."/>
            <person name="Shea T.P."/>
            <person name="Benito M.-I."/>
            <person name="Town C.D."/>
            <person name="Fujii C.Y."/>
            <person name="Mason T.M."/>
            <person name="Bowman C.L."/>
            <person name="Barnstead M.E."/>
            <person name="Feldblyum T.V."/>
            <person name="Buell C.R."/>
            <person name="Ketchum K.A."/>
            <person name="Lee J.J."/>
            <person name="Ronning C.M."/>
            <person name="Koo H.L."/>
            <person name="Moffat K.S."/>
            <person name="Cronin L.A."/>
            <person name="Shen M."/>
            <person name="Pai G."/>
            <person name="Van Aken S."/>
            <person name="Umayam L."/>
            <person name="Tallon L.J."/>
            <person name="Gill J.E."/>
            <person name="Adams M.D."/>
            <person name="Carrera A.J."/>
            <person name="Creasy T.H."/>
            <person name="Goodman H.M."/>
            <person name="Somerville C.R."/>
            <person name="Copenhaver G.P."/>
            <person name="Preuss D."/>
            <person name="Nierman W.C."/>
            <person name="White O."/>
            <person name="Eisen J.A."/>
            <person name="Salzberg S.L."/>
            <person name="Fraser C.M."/>
            <person name="Venter J.C."/>
        </authorList>
    </citation>
    <scope>NUCLEOTIDE SEQUENCE [LARGE SCALE GENOMIC DNA]</scope>
    <source>
        <strain>cv. Columbia</strain>
    </source>
</reference>
<reference key="2">
    <citation type="journal article" date="2017" name="Plant J.">
        <title>Araport11: a complete reannotation of the Arabidopsis thaliana reference genome.</title>
        <authorList>
            <person name="Cheng C.Y."/>
            <person name="Krishnakumar V."/>
            <person name="Chan A.P."/>
            <person name="Thibaud-Nissen F."/>
            <person name="Schobel S."/>
            <person name="Town C.D."/>
        </authorList>
    </citation>
    <scope>GENOME REANNOTATION</scope>
    <source>
        <strain>cv. Columbia</strain>
    </source>
</reference>
<reference key="3">
    <citation type="journal article" date="2003" name="Science">
        <title>Empirical analysis of transcriptional activity in the Arabidopsis genome.</title>
        <authorList>
            <person name="Yamada K."/>
            <person name="Lim J."/>
            <person name="Dale J.M."/>
            <person name="Chen H."/>
            <person name="Shinn P."/>
            <person name="Palm C.J."/>
            <person name="Southwick A.M."/>
            <person name="Wu H.C."/>
            <person name="Kim C.J."/>
            <person name="Nguyen M."/>
            <person name="Pham P.K."/>
            <person name="Cheuk R.F."/>
            <person name="Karlin-Newmann G."/>
            <person name="Liu S.X."/>
            <person name="Lam B."/>
            <person name="Sakano H."/>
            <person name="Wu T."/>
            <person name="Yu G."/>
            <person name="Miranda M."/>
            <person name="Quach H.L."/>
            <person name="Tripp M."/>
            <person name="Chang C.H."/>
            <person name="Lee J.M."/>
            <person name="Toriumi M.J."/>
            <person name="Chan M.M."/>
            <person name="Tang C.C."/>
            <person name="Onodera C.S."/>
            <person name="Deng J.M."/>
            <person name="Akiyama K."/>
            <person name="Ansari Y."/>
            <person name="Arakawa T."/>
            <person name="Banh J."/>
            <person name="Banno F."/>
            <person name="Bowser L."/>
            <person name="Brooks S.Y."/>
            <person name="Carninci P."/>
            <person name="Chao Q."/>
            <person name="Choy N."/>
            <person name="Enju A."/>
            <person name="Goldsmith A.D."/>
            <person name="Gurjal M."/>
            <person name="Hansen N.F."/>
            <person name="Hayashizaki Y."/>
            <person name="Johnson-Hopson C."/>
            <person name="Hsuan V.W."/>
            <person name="Iida K."/>
            <person name="Karnes M."/>
            <person name="Khan S."/>
            <person name="Koesema E."/>
            <person name="Ishida J."/>
            <person name="Jiang P.X."/>
            <person name="Jones T."/>
            <person name="Kawai J."/>
            <person name="Kamiya A."/>
            <person name="Meyers C."/>
            <person name="Nakajima M."/>
            <person name="Narusaka M."/>
            <person name="Seki M."/>
            <person name="Sakurai T."/>
            <person name="Satou M."/>
            <person name="Tamse R."/>
            <person name="Vaysberg M."/>
            <person name="Wallender E.K."/>
            <person name="Wong C."/>
            <person name="Yamamura Y."/>
            <person name="Yuan S."/>
            <person name="Shinozaki K."/>
            <person name="Davis R.W."/>
            <person name="Theologis A."/>
            <person name="Ecker J.R."/>
        </authorList>
    </citation>
    <scope>NUCLEOTIDE SEQUENCE [LARGE SCALE MRNA] (ISOFORM 3)</scope>
    <source>
        <strain>cv. Columbia</strain>
    </source>
</reference>
<reference key="4">
    <citation type="submission" date="2004-03" db="EMBL/GenBank/DDBJ databases">
        <title>Arabidopsis ORF clones.</title>
        <authorList>
            <person name="Cheuk R.F."/>
            <person name="Chen H."/>
            <person name="Kim C.J."/>
            <person name="Shinn P."/>
            <person name="Ecker J.R."/>
        </authorList>
    </citation>
    <scope>NUCLEOTIDE SEQUENCE [LARGE SCALE MRNA] (ISOFORM 4)</scope>
    <source>
        <strain>cv. Columbia</strain>
    </source>
</reference>
<reference key="5">
    <citation type="submission" date="2004-09" db="EMBL/GenBank/DDBJ databases">
        <title>Large-scale analysis of RIKEN Arabidopsis full-length (RAFL) cDNAs.</title>
        <authorList>
            <person name="Totoki Y."/>
            <person name="Seki M."/>
            <person name="Ishida J."/>
            <person name="Nakajima M."/>
            <person name="Enju A."/>
            <person name="Kamiya A."/>
            <person name="Narusaka M."/>
            <person name="Shin-i T."/>
            <person name="Nakagawa M."/>
            <person name="Sakamoto N."/>
            <person name="Oishi K."/>
            <person name="Kohara Y."/>
            <person name="Kobayashi M."/>
            <person name="Toyoda A."/>
            <person name="Sakaki Y."/>
            <person name="Sakurai T."/>
            <person name="Iida K."/>
            <person name="Akiyama K."/>
            <person name="Satou M."/>
            <person name="Toyoda T."/>
            <person name="Konagaya A."/>
            <person name="Carninci P."/>
            <person name="Kawai J."/>
            <person name="Hayashizaki Y."/>
            <person name="Shinozaki K."/>
        </authorList>
    </citation>
    <scope>NUCLEOTIDE SEQUENCE [LARGE SCALE MRNA] (ISOFORM 1)</scope>
    <source>
        <strain>cv. Columbia</strain>
    </source>
</reference>
<reference key="6">
    <citation type="journal article" date="2015" name="Plant Cell">
        <title>Discovery of a unique Clp Component, ClpF, in chloroplasts: A proposed binary ClpF-ClpS1 adaptor complex functions in substrate recognition and delivery.</title>
        <authorList>
            <person name="Nishimura K."/>
            <person name="Apitz J."/>
            <person name="Friso G."/>
            <person name="Kim J."/>
            <person name="Ponnala L."/>
            <person name="Grimm B."/>
            <person name="van Wijk K.J."/>
        </authorList>
    </citation>
    <scope>FUNCTION</scope>
    <scope>DISRUPTION PHENOTYPE</scope>
    <scope>INTERACTION WITH HEMA1; CLPS1; CLPC1 AND CLPC2</scope>
    <scope>SUBCELLULAR LOCATION</scope>
    <scope>DEVELOPMENTAL STAGE</scope>
    <scope>TISSUE SPECIFICITY</scope>
</reference>
<dbReference type="EMBL" id="AC006284">
    <property type="protein sequence ID" value="AAD17436.1"/>
    <property type="molecule type" value="Genomic_DNA"/>
</dbReference>
<dbReference type="EMBL" id="AC006284">
    <property type="protein sequence ID" value="AAD17448.1"/>
    <property type="molecule type" value="Genomic_DNA"/>
</dbReference>
<dbReference type="EMBL" id="CP002685">
    <property type="protein sequence ID" value="AEC05695.1"/>
    <property type="molecule type" value="Genomic_DNA"/>
</dbReference>
<dbReference type="EMBL" id="CP002685">
    <property type="protein sequence ID" value="AEC05696.1"/>
    <property type="molecule type" value="Genomic_DNA"/>
</dbReference>
<dbReference type="EMBL" id="CP002685">
    <property type="protein sequence ID" value="ANM63152.1"/>
    <property type="molecule type" value="Genomic_DNA"/>
</dbReference>
<dbReference type="EMBL" id="AY128399">
    <property type="protein sequence ID" value="AAM91602.1"/>
    <property type="molecule type" value="mRNA"/>
</dbReference>
<dbReference type="EMBL" id="BT000080">
    <property type="protein sequence ID" value="AAN15399.1"/>
    <property type="molecule type" value="mRNA"/>
</dbReference>
<dbReference type="EMBL" id="BT012279">
    <property type="protein sequence ID" value="AAS76766.1"/>
    <property type="molecule type" value="mRNA"/>
</dbReference>
<dbReference type="EMBL" id="AK176535">
    <property type="protein sequence ID" value="BAD44298.1"/>
    <property type="molecule type" value="mRNA"/>
</dbReference>
<dbReference type="EMBL" id="AK176569">
    <property type="protein sequence ID" value="BAD44332.1"/>
    <property type="molecule type" value="mRNA"/>
</dbReference>
<dbReference type="PIR" id="A84448">
    <property type="entry name" value="A84448"/>
</dbReference>
<dbReference type="PIR" id="H84447">
    <property type="entry name" value="H84447"/>
</dbReference>
<dbReference type="RefSeq" id="NP_001189504.1">
    <molecule id="Q67Y99-2"/>
    <property type="nucleotide sequence ID" value="NM_001202575.1"/>
</dbReference>
<dbReference type="RefSeq" id="NP_001325260.1">
    <molecule id="Q67Y99-1"/>
    <property type="nucleotide sequence ID" value="NM_001335180.1"/>
</dbReference>
<dbReference type="RefSeq" id="NP_178438.2">
    <molecule id="Q67Y99-1"/>
    <property type="nucleotide sequence ID" value="NM_126390.4"/>
</dbReference>
<dbReference type="SMR" id="Q67Y99"/>
<dbReference type="FunCoup" id="Q67Y99">
    <property type="interactions" value="1184"/>
</dbReference>
<dbReference type="STRING" id="3702.Q67Y99"/>
<dbReference type="iPTMnet" id="Q67Y99"/>
<dbReference type="PaxDb" id="3702-AT2G03390.1"/>
<dbReference type="ProteomicsDB" id="246656">
    <molecule id="Q67Y99-1"/>
</dbReference>
<dbReference type="EnsemblPlants" id="AT2G03390.1">
    <molecule id="Q67Y99-1"/>
    <property type="protein sequence ID" value="AT2G03390.1"/>
    <property type="gene ID" value="AT2G03390"/>
</dbReference>
<dbReference type="EnsemblPlants" id="AT2G03390.2">
    <molecule id="Q67Y99-2"/>
    <property type="protein sequence ID" value="AT2G03390.2"/>
    <property type="gene ID" value="AT2G03390"/>
</dbReference>
<dbReference type="EnsemblPlants" id="AT2G03390.4">
    <molecule id="Q67Y99-1"/>
    <property type="protein sequence ID" value="AT2G03390.4"/>
    <property type="gene ID" value="AT2G03390"/>
</dbReference>
<dbReference type="GeneID" id="814868"/>
<dbReference type="Gramene" id="AT2G03390.1">
    <molecule id="Q67Y99-1"/>
    <property type="protein sequence ID" value="AT2G03390.1"/>
    <property type="gene ID" value="AT2G03390"/>
</dbReference>
<dbReference type="Gramene" id="AT2G03390.2">
    <molecule id="Q67Y99-2"/>
    <property type="protein sequence ID" value="AT2G03390.2"/>
    <property type="gene ID" value="AT2G03390"/>
</dbReference>
<dbReference type="Gramene" id="AT2G03390.4">
    <molecule id="Q67Y99-1"/>
    <property type="protein sequence ID" value="AT2G03390.4"/>
    <property type="gene ID" value="AT2G03390"/>
</dbReference>
<dbReference type="KEGG" id="ath:AT2G03390"/>
<dbReference type="Araport" id="AT2G03390"/>
<dbReference type="TAIR" id="AT2G03390"/>
<dbReference type="eggNOG" id="ENOG502QPQU">
    <property type="taxonomic scope" value="Eukaryota"/>
</dbReference>
<dbReference type="HOGENOM" id="CLU_068157_1_0_1"/>
<dbReference type="InParanoid" id="Q67Y99"/>
<dbReference type="OMA" id="DMGRFDH"/>
<dbReference type="PhylomeDB" id="Q67Y99"/>
<dbReference type="PRO" id="PR:Q67Y99"/>
<dbReference type="Proteomes" id="UP000006548">
    <property type="component" value="Chromosome 2"/>
</dbReference>
<dbReference type="ExpressionAtlas" id="Q67Y99">
    <property type="expression patterns" value="baseline and differential"/>
</dbReference>
<dbReference type="GO" id="GO:0009507">
    <property type="term" value="C:chloroplast"/>
    <property type="evidence" value="ECO:0000314"/>
    <property type="project" value="UniProtKB"/>
</dbReference>
<dbReference type="GO" id="GO:0009840">
    <property type="term" value="C:chloroplastic endopeptidase Clp complex"/>
    <property type="evidence" value="ECO:0000315"/>
    <property type="project" value="UniProtKB"/>
</dbReference>
<dbReference type="GO" id="GO:0003677">
    <property type="term" value="F:DNA binding"/>
    <property type="evidence" value="ECO:0007669"/>
    <property type="project" value="InterPro"/>
</dbReference>
<dbReference type="FunFam" id="2.30.30.390:FF:000002">
    <property type="entry name" value="Clp protease adapter protein ClpF, chloroplastic"/>
    <property type="match status" value="1"/>
</dbReference>
<dbReference type="Gene3D" id="2.30.30.390">
    <property type="entry name" value="Hemimethylated DNA-binding domain"/>
    <property type="match status" value="1"/>
</dbReference>
<dbReference type="InterPro" id="IPR053189">
    <property type="entry name" value="Clp_protease_adapter_ClpF"/>
</dbReference>
<dbReference type="InterPro" id="IPR011722">
    <property type="entry name" value="Hemimethylated_DNA-bd_dom"/>
</dbReference>
<dbReference type="InterPro" id="IPR036623">
    <property type="entry name" value="Hemimethylated_DNA-bd_sf"/>
</dbReference>
<dbReference type="InterPro" id="IPR001943">
    <property type="entry name" value="UVR_dom"/>
</dbReference>
<dbReference type="NCBIfam" id="TIGR02097">
    <property type="entry name" value="yccV"/>
    <property type="match status" value="1"/>
</dbReference>
<dbReference type="PANTHER" id="PTHR48439">
    <property type="entry name" value="HEMIMETHYLATED DNA-BINDING DOMAIN-CONTAINING PROTEIN"/>
    <property type="match status" value="1"/>
</dbReference>
<dbReference type="PANTHER" id="PTHR48439:SF1">
    <property type="entry name" value="HEMIMETHYLATED DNA-BINDING DOMAIN-CONTAINING PROTEIN"/>
    <property type="match status" value="1"/>
</dbReference>
<dbReference type="Pfam" id="PF02151">
    <property type="entry name" value="UVR"/>
    <property type="match status" value="1"/>
</dbReference>
<dbReference type="Pfam" id="PF08755">
    <property type="entry name" value="YccV-like"/>
    <property type="match status" value="1"/>
</dbReference>
<dbReference type="SMART" id="SM00992">
    <property type="entry name" value="YccV-like"/>
    <property type="match status" value="1"/>
</dbReference>
<dbReference type="SUPFAM" id="SSF141255">
    <property type="entry name" value="YccV-like"/>
    <property type="match status" value="1"/>
</dbReference>
<comment type="function">
    <text evidence="3">Clp protease adapter that facilitates CLPS1 recruitment to ClpC chaperones thus forming a binary adapter for selective substrate recognition and delivery to plastid Clp protease system (CLPC).</text>
</comment>
<comment type="subunit">
    <text evidence="3">Binds to CLPC1 and CLPC2. Interacts with ClpS1; this interaction stimulates their association with ClpC. Associates with the Clp substrate HEMA1 (GluTR).</text>
</comment>
<comment type="subcellular location">
    <subcellularLocation>
        <location evidence="3">Plastid</location>
        <location evidence="3">Chloroplast</location>
    </subcellularLocation>
</comment>
<comment type="alternative products">
    <event type="alternative splicing"/>
    <isoform>
        <id>Q67Y99-1</id>
        <name>1</name>
        <sequence type="displayed"/>
    </isoform>
    <isoform>
        <id>Q67Y99-2</id>
        <name>2</name>
        <sequence type="described" ref="VSP_058669"/>
    </isoform>
    <isoform>
        <id>Q67Y99-3</id>
        <name>3</name>
        <sequence type="described" ref="VSP_058668"/>
    </isoform>
    <isoform>
        <id>Q67Y99-4</id>
        <name>4</name>
        <sequence type="described" ref="VSP_058670 VSP_058671"/>
    </isoform>
</comment>
<comment type="tissue specificity">
    <text evidence="3">Expressed constitutively in photosynthetic tissues such as leaves, stems and flowers, and, at low levels, in siliques.</text>
</comment>
<comment type="developmental stage">
    <text evidence="3">Slight reduction during senescence.</text>
</comment>
<comment type="disruption phenotype">
    <text evidence="3">Reduction by 10 precent of total chlorophyll, with slight increase of chlorophyll a/b ratio and slight decrease of chlorophyll-to-carotenoid ratios. Overaccumulation of ClpS1 protein.</text>
</comment>
<sequence length="330" mass="37440">MVQSQSLSTLTICGSVKVSSLLRNRLNSVKASSLIGDRCVSCQFLRKSPSFRSHWKSLKQRNLLRVEARWPFQGGGEQGLDPSSERSESANEDILIFFFQLDLATRVQYAMNLEQYDIAQQLREKLTEVEEESIRLQEGKRGSSAKSEAQDKGISIIRLRADLQNAIDSEDYGLAAKLRDEISKLEAESLAVSAKALAFEKAEYAFRLGQKLRHKTFGYRAVVCGMDPICSESSSWMEAAEVEKLPRGSNQPFYQVLVDVRTHPDLLVAYVAEDNLLAPEKPDKERFDHPYISFLYYGADTAGDFIPVKQLREKYNRPRHEVPFDSQDED</sequence>
<organism>
    <name type="scientific">Arabidopsis thaliana</name>
    <name type="common">Mouse-ear cress</name>
    <dbReference type="NCBI Taxonomy" id="3702"/>
    <lineage>
        <taxon>Eukaryota</taxon>
        <taxon>Viridiplantae</taxon>
        <taxon>Streptophyta</taxon>
        <taxon>Embryophyta</taxon>
        <taxon>Tracheophyta</taxon>
        <taxon>Spermatophyta</taxon>
        <taxon>Magnoliopsida</taxon>
        <taxon>eudicotyledons</taxon>
        <taxon>Gunneridae</taxon>
        <taxon>Pentapetalae</taxon>
        <taxon>rosids</taxon>
        <taxon>malvids</taxon>
        <taxon>Brassicales</taxon>
        <taxon>Brassicaceae</taxon>
        <taxon>Camelineae</taxon>
        <taxon>Arabidopsis</taxon>
    </lineage>
</organism>
<accession>Q67Y99</accession>
<accession>Q8L7K8</accession>
<accession>Q9ZQ75</accession>
<accession>Q9ZQ76</accession>
<protein>
    <recommendedName>
        <fullName evidence="4">Clp protease adapter protein ClpF, chloroplastic</fullName>
    </recommendedName>
</protein>
<proteinExistence type="evidence at protein level"/>
<keyword id="KW-0025">Alternative splicing</keyword>
<keyword id="KW-0150">Chloroplast</keyword>
<keyword id="KW-0175">Coiled coil</keyword>
<keyword id="KW-0934">Plastid</keyword>
<keyword id="KW-1185">Reference proteome</keyword>
<keyword id="KW-0809">Transit peptide</keyword>
<name>CLPF_ARATH</name>